<feature type="chain" id="PRO_0000168148" description="Zinc finger protein neuro-d4">
    <location>
        <begin position="1"/>
        <end position="380"/>
    </location>
</feature>
<feature type="zinc finger region" description="C2H2-type" evidence="3">
    <location>
        <begin position="190"/>
        <end position="213"/>
    </location>
</feature>
<feature type="zinc finger region" description="PHD-type 1" evidence="4">
    <location>
        <begin position="262"/>
        <end position="321"/>
    </location>
</feature>
<feature type="zinc finger region" description="PHD-type 2" evidence="4">
    <location>
        <begin position="318"/>
        <end position="368"/>
    </location>
</feature>
<feature type="region of interest" description="Disordered" evidence="5">
    <location>
        <begin position="132"/>
        <end position="164"/>
    </location>
</feature>
<feature type="binding site" evidence="4">
    <location>
        <position position="265"/>
    </location>
    <ligand>
        <name>Zn(2+)</name>
        <dbReference type="ChEBI" id="CHEBI:29105"/>
        <label>1</label>
    </ligand>
</feature>
<feature type="binding site" evidence="4">
    <location>
        <position position="268"/>
    </location>
    <ligand>
        <name>Zn(2+)</name>
        <dbReference type="ChEBI" id="CHEBI:29105"/>
        <label>1</label>
    </ligand>
</feature>
<feature type="binding site" evidence="4">
    <location>
        <position position="286"/>
    </location>
    <ligand>
        <name>Zn(2+)</name>
        <dbReference type="ChEBI" id="CHEBI:29105"/>
        <label>2</label>
    </ligand>
</feature>
<feature type="binding site" evidence="4">
    <location>
        <position position="289"/>
    </location>
    <ligand>
        <name>Zn(2+)</name>
        <dbReference type="ChEBI" id="CHEBI:29105"/>
        <label>2</label>
    </ligand>
</feature>
<feature type="binding site" evidence="4">
    <location>
        <position position="294"/>
    </location>
    <ligand>
        <name>Zn(2+)</name>
        <dbReference type="ChEBI" id="CHEBI:29105"/>
        <label>1</label>
    </ligand>
</feature>
<feature type="binding site" evidence="4">
    <location>
        <position position="297"/>
    </location>
    <ligand>
        <name>Zn(2+)</name>
        <dbReference type="ChEBI" id="CHEBI:29105"/>
        <label>1</label>
    </ligand>
</feature>
<feature type="binding site" evidence="4">
    <location>
        <position position="315"/>
    </location>
    <ligand>
        <name>Zn(2+)</name>
        <dbReference type="ChEBI" id="CHEBI:29105"/>
        <label>2</label>
    </ligand>
</feature>
<feature type="binding site" evidence="4">
    <location>
        <position position="318"/>
    </location>
    <ligand>
        <name>Zn(2+)</name>
        <dbReference type="ChEBI" id="CHEBI:29105"/>
        <label>4</label>
    </ligand>
</feature>
<feature type="binding site" evidence="4">
    <location>
        <position position="321"/>
    </location>
    <ligand>
        <name>Zn(2+)</name>
        <dbReference type="ChEBI" id="CHEBI:29105"/>
        <label>3</label>
    </ligand>
</feature>
<feature type="binding site" evidence="4">
    <location>
        <position position="324"/>
    </location>
    <ligand>
        <name>Zn(2+)</name>
        <dbReference type="ChEBI" id="CHEBI:29105"/>
        <label>3</label>
    </ligand>
</feature>
<feature type="binding site" evidence="4">
    <location>
        <position position="336"/>
    </location>
    <ligand>
        <name>Zn(2+)</name>
        <dbReference type="ChEBI" id="CHEBI:29105"/>
        <label>4</label>
    </ligand>
</feature>
<feature type="binding site" evidence="4">
    <location>
        <position position="339"/>
    </location>
    <ligand>
        <name>Zn(2+)</name>
        <dbReference type="ChEBI" id="CHEBI:29105"/>
        <label>4</label>
    </ligand>
</feature>
<feature type="binding site" evidence="4">
    <location>
        <position position="344"/>
    </location>
    <ligand>
        <name>Zn(2+)</name>
        <dbReference type="ChEBI" id="CHEBI:29105"/>
        <label>3</label>
    </ligand>
</feature>
<feature type="binding site" evidence="4">
    <location>
        <position position="347"/>
    </location>
    <ligand>
        <name>Zn(2+)</name>
        <dbReference type="ChEBI" id="CHEBI:29105"/>
        <label>3</label>
    </ligand>
</feature>
<feature type="binding site" evidence="4">
    <location>
        <position position="362"/>
    </location>
    <ligand>
        <name>Zn(2+)</name>
        <dbReference type="ChEBI" id="CHEBI:29105"/>
        <label>4</label>
    </ligand>
</feature>
<feature type="binding site" evidence="4">
    <location>
        <position position="365"/>
    </location>
    <ligand>
        <name>Zn(2+)</name>
        <dbReference type="ChEBI" id="CHEBI:29105"/>
        <label>4</label>
    </ligand>
</feature>
<keyword id="KW-0963">Cytoplasm</keyword>
<keyword id="KW-0479">Metal-binding</keyword>
<keyword id="KW-0524">Neurogenesis</keyword>
<keyword id="KW-0539">Nucleus</keyword>
<keyword id="KW-1185">Reference proteome</keyword>
<keyword id="KW-0677">Repeat</keyword>
<keyword id="KW-0804">Transcription</keyword>
<keyword id="KW-0805">Transcription regulation</keyword>
<keyword id="KW-0862">Zinc</keyword>
<keyword id="KW-0863">Zinc-finger</keyword>
<comment type="function">
    <text evidence="6">May have an important role in developing neurons by participating in regulation of cell survival, possibly as a neurospecific transcription factor. Belongs to the neuron-specific chromatin remodeling complex (nBAF complex) and plays a role in neural development.</text>
</comment>
<comment type="subunit">
    <text evidence="1">Component of neuron-specific chromatin remodeling complex (nBAF complex), a subfamily of ATP-dependent SWI/SNF chromatin remodeling complexes.</text>
</comment>
<comment type="subcellular location">
    <subcellularLocation>
        <location evidence="7">Cytoplasm</location>
    </subcellularLocation>
    <subcellularLocation>
        <location evidence="7">Nucleus</location>
    </subcellularLocation>
</comment>
<comment type="similarity">
    <text evidence="7">Belongs to the requiem/DPF family.</text>
</comment>
<reference key="1">
    <citation type="journal article" date="2001" name="Mamm. Genome">
        <title>Cerd4, third member of the d4 gene family: expression and organization of genomic locus.</title>
        <authorList>
            <person name="Ninkina N.N."/>
            <person name="Mertsalov I.B."/>
            <person name="Kulikova D.A."/>
            <person name="Alimova-Kost M.V."/>
            <person name="Simonova O.B."/>
            <person name="Korochkin L.I."/>
            <person name="Kiselev S.L."/>
            <person name="Buchman V.L."/>
        </authorList>
    </citation>
    <scope>NUCLEOTIDE SEQUENCE [MRNA]</scope>
</reference>
<reference key="2">
    <citation type="journal article" date="2007" name="Neuron">
        <title>An essential switch in subunit composition of a chromatin remodeling complex during neural development.</title>
        <authorList>
            <person name="Lessard J."/>
            <person name="Wu J.I."/>
            <person name="Ranish J.A."/>
            <person name="Wan M."/>
            <person name="Winslow M.M."/>
            <person name="Staahl B.T."/>
            <person name="Wu H."/>
            <person name="Aebersold R."/>
            <person name="Graef I.A."/>
            <person name="Crabtree G.R."/>
        </authorList>
    </citation>
    <scope>FUNCTION</scope>
</reference>
<proteinExistence type="evidence at transcript level"/>
<evidence type="ECO:0000250" key="1"/>
<evidence type="ECO:0000250" key="2">
    <source>
        <dbReference type="UniProtKB" id="Q92782"/>
    </source>
</evidence>
<evidence type="ECO:0000255" key="3">
    <source>
        <dbReference type="PROSITE-ProRule" id="PRU00042"/>
    </source>
</evidence>
<evidence type="ECO:0000255" key="4">
    <source>
        <dbReference type="PROSITE-ProRule" id="PRU00146"/>
    </source>
</evidence>
<evidence type="ECO:0000256" key="5">
    <source>
        <dbReference type="SAM" id="MobiDB-lite"/>
    </source>
</evidence>
<evidence type="ECO:0000269" key="6">
    <source>
    </source>
</evidence>
<evidence type="ECO:0000305" key="7"/>
<gene>
    <name evidence="2" type="primary">DPF1</name>
    <name type="synonym">NEUD4</name>
</gene>
<dbReference type="EMBL" id="AF362752">
    <property type="protein sequence ID" value="AAK51966.1"/>
    <property type="molecule type" value="mRNA"/>
</dbReference>
<dbReference type="RefSeq" id="NP_989971.1">
    <property type="nucleotide sequence ID" value="NM_204640.1"/>
</dbReference>
<dbReference type="SMR" id="P58267"/>
<dbReference type="FunCoup" id="P58267">
    <property type="interactions" value="185"/>
</dbReference>
<dbReference type="STRING" id="9031.ENSGALP00000069963"/>
<dbReference type="GeneID" id="395352"/>
<dbReference type="KEGG" id="gga:395352"/>
<dbReference type="CTD" id="8193"/>
<dbReference type="VEuPathDB" id="HostDB:geneid_395351"/>
<dbReference type="InParanoid" id="P58267"/>
<dbReference type="PhylomeDB" id="P58267"/>
<dbReference type="PRO" id="PR:P58267"/>
<dbReference type="Proteomes" id="UP000000539">
    <property type="component" value="Unassembled WGS sequence"/>
</dbReference>
<dbReference type="GO" id="GO:0005737">
    <property type="term" value="C:cytoplasm"/>
    <property type="evidence" value="ECO:0007669"/>
    <property type="project" value="UniProtKB-SubCell"/>
</dbReference>
<dbReference type="GO" id="GO:0071565">
    <property type="term" value="C:nBAF complex"/>
    <property type="evidence" value="ECO:0000318"/>
    <property type="project" value="GO_Central"/>
</dbReference>
<dbReference type="GO" id="GO:0008270">
    <property type="term" value="F:zinc ion binding"/>
    <property type="evidence" value="ECO:0007669"/>
    <property type="project" value="UniProtKB-KW"/>
</dbReference>
<dbReference type="GO" id="GO:0007399">
    <property type="term" value="P:nervous system development"/>
    <property type="evidence" value="ECO:0000250"/>
    <property type="project" value="UniProtKB"/>
</dbReference>
<dbReference type="CDD" id="cd15530">
    <property type="entry name" value="PHD2_d4"/>
    <property type="match status" value="1"/>
</dbReference>
<dbReference type="FunFam" id="3.30.160.60:FF:003699">
    <property type="entry name" value="D4, zinc and double PHD fingers family 1"/>
    <property type="match status" value="1"/>
</dbReference>
<dbReference type="FunFam" id="3.30.40.10:FF:000005">
    <property type="entry name" value="zinc finger protein isoform X1"/>
    <property type="match status" value="1"/>
</dbReference>
<dbReference type="Gene3D" id="3.30.160.60">
    <property type="entry name" value="Classic Zinc Finger"/>
    <property type="match status" value="1"/>
</dbReference>
<dbReference type="Gene3D" id="3.30.40.10">
    <property type="entry name" value="Zinc/RING finger domain, C3HC4 (zinc finger)"/>
    <property type="match status" value="1"/>
</dbReference>
<dbReference type="InterPro" id="IPR025750">
    <property type="entry name" value="DPF1-3_N"/>
</dbReference>
<dbReference type="InterPro" id="IPR036236">
    <property type="entry name" value="Znf_C2H2_sf"/>
</dbReference>
<dbReference type="InterPro" id="IPR013087">
    <property type="entry name" value="Znf_C2H2_type"/>
</dbReference>
<dbReference type="InterPro" id="IPR011011">
    <property type="entry name" value="Znf_FYVE_PHD"/>
</dbReference>
<dbReference type="InterPro" id="IPR001965">
    <property type="entry name" value="Znf_PHD"/>
</dbReference>
<dbReference type="InterPro" id="IPR019787">
    <property type="entry name" value="Znf_PHD-finger"/>
</dbReference>
<dbReference type="InterPro" id="IPR013083">
    <property type="entry name" value="Znf_RING/FYVE/PHD"/>
</dbReference>
<dbReference type="PANTHER" id="PTHR45888">
    <property type="entry name" value="HL01030P-RELATED"/>
    <property type="match status" value="1"/>
</dbReference>
<dbReference type="PANTHER" id="PTHR45888:SF14">
    <property type="entry name" value="ZINC FINGER PROTEIN NEURO-D4"/>
    <property type="match status" value="1"/>
</dbReference>
<dbReference type="Pfam" id="PF14051">
    <property type="entry name" value="DPF1-3_N"/>
    <property type="match status" value="1"/>
</dbReference>
<dbReference type="Pfam" id="PF00628">
    <property type="entry name" value="PHD"/>
    <property type="match status" value="2"/>
</dbReference>
<dbReference type="SMART" id="SM00249">
    <property type="entry name" value="PHD"/>
    <property type="match status" value="2"/>
</dbReference>
<dbReference type="SMART" id="SM00355">
    <property type="entry name" value="ZnF_C2H2"/>
    <property type="match status" value="1"/>
</dbReference>
<dbReference type="SUPFAM" id="SSF57667">
    <property type="entry name" value="beta-beta-alpha zinc fingers"/>
    <property type="match status" value="1"/>
</dbReference>
<dbReference type="SUPFAM" id="SSF57903">
    <property type="entry name" value="FYVE/PHD zinc finger"/>
    <property type="match status" value="2"/>
</dbReference>
<dbReference type="PROSITE" id="PS01359">
    <property type="entry name" value="ZF_PHD_1"/>
    <property type="match status" value="1"/>
</dbReference>
<dbReference type="PROSITE" id="PS50016">
    <property type="entry name" value="ZF_PHD_2"/>
    <property type="match status" value="2"/>
</dbReference>
<dbReference type="PROSITE" id="PS00028">
    <property type="entry name" value="ZINC_FINGER_C2H2_1"/>
    <property type="match status" value="1"/>
</dbReference>
<dbReference type="PROSITE" id="PS50157">
    <property type="entry name" value="ZINC_FINGER_C2H2_2"/>
    <property type="match status" value="1"/>
</dbReference>
<organism>
    <name type="scientific">Gallus gallus</name>
    <name type="common">Chicken</name>
    <dbReference type="NCBI Taxonomy" id="9031"/>
    <lineage>
        <taxon>Eukaryota</taxon>
        <taxon>Metazoa</taxon>
        <taxon>Chordata</taxon>
        <taxon>Craniata</taxon>
        <taxon>Vertebrata</taxon>
        <taxon>Euteleostomi</taxon>
        <taxon>Archelosauria</taxon>
        <taxon>Archosauria</taxon>
        <taxon>Dinosauria</taxon>
        <taxon>Saurischia</taxon>
        <taxon>Theropoda</taxon>
        <taxon>Coelurosauria</taxon>
        <taxon>Aves</taxon>
        <taxon>Neognathae</taxon>
        <taxon>Galloanserae</taxon>
        <taxon>Galliformes</taxon>
        <taxon>Phasianidae</taxon>
        <taxon>Phasianinae</taxon>
        <taxon>Gallus</taxon>
    </lineage>
</organism>
<sequence>MAAAVHGALKAVGEDFYRDAIEHCRSYNARLSAERSTRLPFLDAQTGVAQSDCYIWMERSHRGPGLSPGQIYSYPARCWRKKRRLNILEDPRLRPLCDAPQKKELGSAVAEGAVLEALLCAEPPKEPKEEEALLDCQKPPPGDFAHDAEGDEMEDDAPRRKNKAKGKTYGLGAVRKRQDAAALEDRDKPYVCDICGKRYKNRPGLSYHYTHTHLAEEEGEESAERHPLPFQRRNHHKQFYKELNWVPESQRRHAAAAGRRSEGPCDFCVGGAVRRAALGHEEMIACADCGRAGHPSCLQFTLAMAAAARSYRWQCIECKNCSLCGSAENDEQLLFCDDCDRGYHMYCISPPVAEPPEGTWSCHLCLRQLKDKAAAFITLT</sequence>
<name>DPF1_CHICK</name>
<protein>
    <recommendedName>
        <fullName evidence="2">Zinc finger protein neuro-d4</fullName>
    </recommendedName>
    <alternativeName>
        <fullName>D4, zinc and double PHD fingers family 1</fullName>
    </alternativeName>
</protein>
<accession>P58267</accession>